<feature type="signal peptide" evidence="3">
    <location>
        <begin position="1"/>
        <end position="37"/>
    </location>
</feature>
<feature type="propeptide" id="PRO_0000019775" evidence="1">
    <location>
        <begin position="38"/>
        <end position="105"/>
    </location>
</feature>
<feature type="peptide" id="PRO_0000445767" description="Neuromedin precursor-related peptide 36" evidence="2">
    <location>
        <begin position="106"/>
        <end position="141"/>
    </location>
</feature>
<feature type="peptide" id="PRO_0000445768" description="Neuromedin precursor-related peptide 33" evidence="2">
    <location>
        <begin position="106"/>
        <end position="138"/>
    </location>
</feature>
<feature type="peptide" id="PRO_0000019776" description="Neuromedin-U-23">
    <location>
        <begin position="144"/>
        <end position="166"/>
    </location>
</feature>
<feature type="propeptide" id="PRO_0000019777" evidence="1">
    <location>
        <begin position="170"/>
        <end position="174"/>
    </location>
</feature>
<feature type="modified residue" description="Methionine sulfoxide; partial" evidence="2">
    <location>
        <position position="141"/>
    </location>
</feature>
<feature type="modified residue" description="Asparagine amide" evidence="1">
    <location>
        <position position="166"/>
    </location>
</feature>
<gene>
    <name type="primary">Nmu</name>
</gene>
<protein>
    <recommendedName>
        <fullName>Neuromedin-U</fullName>
    </recommendedName>
    <component>
        <recommendedName>
            <fullName evidence="2">Neuromedin precursor-related peptide 36</fullName>
            <shortName evidence="2">NURP36</shortName>
        </recommendedName>
    </component>
    <component>
        <recommendedName>
            <fullName evidence="2">Neuromedin precursor-related peptide 33</fullName>
            <shortName evidence="2">NURP33</shortName>
        </recommendedName>
    </component>
    <component>
        <recommendedName>
            <fullName>Neuromedin-U-23</fullName>
            <shortName>NmU-23</shortName>
        </recommendedName>
    </component>
</protein>
<dbReference type="EMBL" id="AF203444">
    <property type="protein sequence ID" value="AAF20198.1"/>
    <property type="molecule type" value="mRNA"/>
</dbReference>
<dbReference type="EMBL" id="AK077478">
    <property type="protein sequence ID" value="BAC36820.1"/>
    <property type="molecule type" value="mRNA"/>
</dbReference>
<dbReference type="CCDS" id="CCDS19362.1"/>
<dbReference type="RefSeq" id="NP_062388.1">
    <property type="nucleotide sequence ID" value="NM_019515.1"/>
</dbReference>
<dbReference type="FunCoup" id="Q9QXK8">
    <property type="interactions" value="371"/>
</dbReference>
<dbReference type="STRING" id="10090.ENSMUSP00000031146"/>
<dbReference type="iPTMnet" id="Q9QXK8"/>
<dbReference type="PhosphoSitePlus" id="Q9QXK8"/>
<dbReference type="PaxDb" id="10090-ENSMUSP00000031146"/>
<dbReference type="ProteomicsDB" id="252975"/>
<dbReference type="Antibodypedia" id="12370">
    <property type="antibodies" value="165 antibodies from 27 providers"/>
</dbReference>
<dbReference type="DNASU" id="56183"/>
<dbReference type="Ensembl" id="ENSMUST00000031146.3">
    <property type="protein sequence ID" value="ENSMUSP00000031146.3"/>
    <property type="gene ID" value="ENSMUSG00000029236.5"/>
</dbReference>
<dbReference type="GeneID" id="56183"/>
<dbReference type="KEGG" id="mmu:56183"/>
<dbReference type="UCSC" id="uc008xuw.1">
    <property type="organism name" value="mouse"/>
</dbReference>
<dbReference type="AGR" id="MGI:1860476"/>
<dbReference type="CTD" id="10874"/>
<dbReference type="MGI" id="MGI:1860476">
    <property type="gene designation" value="Nmu"/>
</dbReference>
<dbReference type="VEuPathDB" id="HostDB:ENSMUSG00000029236"/>
<dbReference type="eggNOG" id="ENOG502S1QB">
    <property type="taxonomic scope" value="Eukaryota"/>
</dbReference>
<dbReference type="GeneTree" id="ENSGT00510000048726"/>
<dbReference type="HOGENOM" id="CLU_090356_0_0_1"/>
<dbReference type="InParanoid" id="Q9QXK8"/>
<dbReference type="OMA" id="LWSEQEL"/>
<dbReference type="OrthoDB" id="9879773at2759"/>
<dbReference type="PhylomeDB" id="Q9QXK8"/>
<dbReference type="TreeFam" id="TF338319"/>
<dbReference type="Reactome" id="R-MMU-375276">
    <property type="pathway name" value="Peptide ligand-binding receptors"/>
</dbReference>
<dbReference type="Reactome" id="R-MMU-416476">
    <property type="pathway name" value="G alpha (q) signalling events"/>
</dbReference>
<dbReference type="Reactome" id="R-MMU-418594">
    <property type="pathway name" value="G alpha (i) signalling events"/>
</dbReference>
<dbReference type="BioGRID-ORCS" id="56183">
    <property type="hits" value="3 hits in 79 CRISPR screens"/>
</dbReference>
<dbReference type="PRO" id="PR:Q9QXK8"/>
<dbReference type="Proteomes" id="UP000000589">
    <property type="component" value="Chromosome 5"/>
</dbReference>
<dbReference type="RNAct" id="Q9QXK8">
    <property type="molecule type" value="protein"/>
</dbReference>
<dbReference type="Bgee" id="ENSMUSG00000029236">
    <property type="expression patterns" value="Expressed in lip and 28 other cell types or tissues"/>
</dbReference>
<dbReference type="ExpressionAtlas" id="Q9QXK8">
    <property type="expression patterns" value="baseline and differential"/>
</dbReference>
<dbReference type="GO" id="GO:0005576">
    <property type="term" value="C:extracellular region"/>
    <property type="evidence" value="ECO:0007669"/>
    <property type="project" value="UniProtKB-SubCell"/>
</dbReference>
<dbReference type="GO" id="GO:0043195">
    <property type="term" value="C:terminal bouton"/>
    <property type="evidence" value="ECO:0007669"/>
    <property type="project" value="Ensembl"/>
</dbReference>
<dbReference type="GO" id="GO:0042922">
    <property type="term" value="F:neuromedin U receptor binding"/>
    <property type="evidence" value="ECO:0000266"/>
    <property type="project" value="MGI"/>
</dbReference>
<dbReference type="GO" id="GO:0031839">
    <property type="term" value="F:type 1 neuromedin U receptor binding"/>
    <property type="evidence" value="ECO:0007669"/>
    <property type="project" value="Ensembl"/>
</dbReference>
<dbReference type="GO" id="GO:0031840">
    <property type="term" value="F:type 2 neuromedin U receptor binding"/>
    <property type="evidence" value="ECO:0007669"/>
    <property type="project" value="Ensembl"/>
</dbReference>
<dbReference type="GO" id="GO:0042755">
    <property type="term" value="P:eating behavior"/>
    <property type="evidence" value="ECO:0007669"/>
    <property type="project" value="Ensembl"/>
</dbReference>
<dbReference type="GO" id="GO:0097009">
    <property type="term" value="P:energy homeostasis"/>
    <property type="evidence" value="ECO:0000315"/>
    <property type="project" value="UniProtKB"/>
</dbReference>
<dbReference type="GO" id="GO:0001696">
    <property type="term" value="P:gastric acid secretion"/>
    <property type="evidence" value="ECO:0007669"/>
    <property type="project" value="Ensembl"/>
</dbReference>
<dbReference type="GO" id="GO:1903999">
    <property type="term" value="P:negative regulation of eating behavior"/>
    <property type="evidence" value="ECO:0007669"/>
    <property type="project" value="Ensembl"/>
</dbReference>
<dbReference type="GO" id="GO:0060455">
    <property type="term" value="P:negative regulation of gastric acid secretion"/>
    <property type="evidence" value="ECO:0007669"/>
    <property type="project" value="Ensembl"/>
</dbReference>
<dbReference type="GO" id="GO:0120061">
    <property type="term" value="P:negative regulation of gastric emptying"/>
    <property type="evidence" value="ECO:0007669"/>
    <property type="project" value="Ensembl"/>
</dbReference>
<dbReference type="GO" id="GO:0007218">
    <property type="term" value="P:neuropeptide signaling pathway"/>
    <property type="evidence" value="ECO:0000266"/>
    <property type="project" value="MGI"/>
</dbReference>
<dbReference type="GO" id="GO:0009648">
    <property type="term" value="P:photoperiodism"/>
    <property type="evidence" value="ECO:0007669"/>
    <property type="project" value="Ensembl"/>
</dbReference>
<dbReference type="GO" id="GO:0007204">
    <property type="term" value="P:positive regulation of cytosolic calcium ion concentration"/>
    <property type="evidence" value="ECO:0007669"/>
    <property type="project" value="Ensembl"/>
</dbReference>
<dbReference type="GO" id="GO:0010460">
    <property type="term" value="P:positive regulation of heart rate"/>
    <property type="evidence" value="ECO:0007669"/>
    <property type="project" value="Ensembl"/>
</dbReference>
<dbReference type="GO" id="GO:0031652">
    <property type="term" value="P:positive regulation of heat generation"/>
    <property type="evidence" value="ECO:0007669"/>
    <property type="project" value="Ensembl"/>
</dbReference>
<dbReference type="GO" id="GO:1902722">
    <property type="term" value="P:positive regulation of prolactin secretion"/>
    <property type="evidence" value="ECO:0007669"/>
    <property type="project" value="Ensembl"/>
</dbReference>
<dbReference type="GO" id="GO:1904058">
    <property type="term" value="P:positive regulation of sensory perception of pain"/>
    <property type="evidence" value="ECO:0007669"/>
    <property type="project" value="Ensembl"/>
</dbReference>
<dbReference type="GO" id="GO:0120069">
    <property type="term" value="P:positive regulation of stomach fundus smooth muscle contraction"/>
    <property type="evidence" value="ECO:0007669"/>
    <property type="project" value="Ensembl"/>
</dbReference>
<dbReference type="GO" id="GO:0050806">
    <property type="term" value="P:positive regulation of synaptic transmission"/>
    <property type="evidence" value="ECO:0007669"/>
    <property type="project" value="Ensembl"/>
</dbReference>
<dbReference type="GO" id="GO:0003084">
    <property type="term" value="P:positive regulation of systemic arterial blood pressure"/>
    <property type="evidence" value="ECO:0007669"/>
    <property type="project" value="Ensembl"/>
</dbReference>
<dbReference type="GO" id="GO:0045187">
    <property type="term" value="P:regulation of circadian sleep/wake cycle, sleep"/>
    <property type="evidence" value="ECO:0007669"/>
    <property type="project" value="Ensembl"/>
</dbReference>
<dbReference type="GO" id="GO:0060259">
    <property type="term" value="P:regulation of feeding behavior"/>
    <property type="evidence" value="ECO:0000315"/>
    <property type="project" value="UniProtKB"/>
</dbReference>
<dbReference type="GO" id="GO:2000821">
    <property type="term" value="P:regulation of grooming behavior"/>
    <property type="evidence" value="ECO:0000314"/>
    <property type="project" value="UniProtKB"/>
</dbReference>
<dbReference type="GO" id="GO:0001659">
    <property type="term" value="P:temperature homeostasis"/>
    <property type="evidence" value="ECO:0000315"/>
    <property type="project" value="UniProtKB"/>
</dbReference>
<dbReference type="InterPro" id="IPR018070">
    <property type="entry name" value="Neuromedin-U_amidation-site"/>
</dbReference>
<dbReference type="InterPro" id="IPR042384">
    <property type="entry name" value="NMU"/>
</dbReference>
<dbReference type="InterPro" id="IPR008200">
    <property type="entry name" value="NMU_C"/>
</dbReference>
<dbReference type="PANTHER" id="PTHR15390">
    <property type="entry name" value="NEUROMEDIN-U"/>
    <property type="match status" value="1"/>
</dbReference>
<dbReference type="PANTHER" id="PTHR15390:SF0">
    <property type="entry name" value="NEUROMEDIN-U"/>
    <property type="match status" value="1"/>
</dbReference>
<dbReference type="Pfam" id="PF02070">
    <property type="entry name" value="NMU"/>
    <property type="match status" value="1"/>
</dbReference>
<dbReference type="SMART" id="SM00084">
    <property type="entry name" value="NMU"/>
    <property type="match status" value="1"/>
</dbReference>
<dbReference type="PROSITE" id="PS00967">
    <property type="entry name" value="NMU"/>
    <property type="match status" value="1"/>
</dbReference>
<proteinExistence type="evidence at transcript level"/>
<organism>
    <name type="scientific">Mus musculus</name>
    <name type="common">Mouse</name>
    <dbReference type="NCBI Taxonomy" id="10090"/>
    <lineage>
        <taxon>Eukaryota</taxon>
        <taxon>Metazoa</taxon>
        <taxon>Chordata</taxon>
        <taxon>Craniata</taxon>
        <taxon>Vertebrata</taxon>
        <taxon>Euteleostomi</taxon>
        <taxon>Mammalia</taxon>
        <taxon>Eutheria</taxon>
        <taxon>Euarchontoglires</taxon>
        <taxon>Glires</taxon>
        <taxon>Rodentia</taxon>
        <taxon>Myomorpha</taxon>
        <taxon>Muroidea</taxon>
        <taxon>Muridae</taxon>
        <taxon>Murinae</taxon>
        <taxon>Mus</taxon>
        <taxon>Mus</taxon>
    </lineage>
</organism>
<evidence type="ECO:0000250" key="1"/>
<evidence type="ECO:0000250" key="2">
    <source>
        <dbReference type="UniProtKB" id="P12760"/>
    </source>
</evidence>
<evidence type="ECO:0000255" key="3"/>
<evidence type="ECO:0000305" key="4"/>
<keyword id="KW-0027">Amidation</keyword>
<keyword id="KW-0165">Cleavage on pair of basic residues</keyword>
<keyword id="KW-0527">Neuropeptide</keyword>
<keyword id="KW-0558">Oxidation</keyword>
<keyword id="KW-1185">Reference proteome</keyword>
<keyword id="KW-0964">Secreted</keyword>
<keyword id="KW-0732">Signal</keyword>
<comment type="function">
    <molecule>Neuromedin-U-23</molecule>
    <text evidence="2">Ligand for receptors NMUR1 and NMUR2 (By similarity). Stimulates muscle contractions of specific regions of the gastrointestinal tract.</text>
</comment>
<comment type="function">
    <molecule>Neuromedin precursor-related peptide 33</molecule>
    <text evidence="2">Does not function as a ligand for either NMUR1 or NMUR2. Indirectly induces prolactin release although its potency is much lower than that of neuromedin precursor-related peptide 36.</text>
</comment>
<comment type="function">
    <molecule>Neuromedin precursor-related peptide 36</molecule>
    <text evidence="2">Does not function as a ligand for either NMUR1 or NMUR2. Indirectly induces prolactin release from lactotroph cells in the pituitary gland, probably via the hypothalamic dopaminergic system.</text>
</comment>
<comment type="function">
    <text evidence="1">Stimulates muscle contractions of specific regions of the gastrointestinal tract.</text>
</comment>
<comment type="subcellular location">
    <subcellularLocation>
        <location>Secreted</location>
    </subcellularLocation>
</comment>
<comment type="similarity">
    <text evidence="4">Belongs to the NmU family.</text>
</comment>
<name>NMU_MOUSE</name>
<reference key="1">
    <citation type="submission" date="1999-11" db="EMBL/GenBank/DDBJ databases">
        <title>Molecular cloning and characterisation of the cDNA encoding the mouse neuromedin U (NmU) precursor peptide.</title>
        <authorList>
            <person name="Sharma S.K."/>
            <person name="Bloom S.R."/>
        </authorList>
    </citation>
    <scope>NUCLEOTIDE SEQUENCE [MRNA]</scope>
    <source>
        <strain>BALB/cJ</strain>
    </source>
</reference>
<reference key="2">
    <citation type="journal article" date="2005" name="Science">
        <title>The transcriptional landscape of the mammalian genome.</title>
        <authorList>
            <person name="Carninci P."/>
            <person name="Kasukawa T."/>
            <person name="Katayama S."/>
            <person name="Gough J."/>
            <person name="Frith M.C."/>
            <person name="Maeda N."/>
            <person name="Oyama R."/>
            <person name="Ravasi T."/>
            <person name="Lenhard B."/>
            <person name="Wells C."/>
            <person name="Kodzius R."/>
            <person name="Shimokawa K."/>
            <person name="Bajic V.B."/>
            <person name="Brenner S.E."/>
            <person name="Batalov S."/>
            <person name="Forrest A.R."/>
            <person name="Zavolan M."/>
            <person name="Davis M.J."/>
            <person name="Wilming L.G."/>
            <person name="Aidinis V."/>
            <person name="Allen J.E."/>
            <person name="Ambesi-Impiombato A."/>
            <person name="Apweiler R."/>
            <person name="Aturaliya R.N."/>
            <person name="Bailey T.L."/>
            <person name="Bansal M."/>
            <person name="Baxter L."/>
            <person name="Beisel K.W."/>
            <person name="Bersano T."/>
            <person name="Bono H."/>
            <person name="Chalk A.M."/>
            <person name="Chiu K.P."/>
            <person name="Choudhary V."/>
            <person name="Christoffels A."/>
            <person name="Clutterbuck D.R."/>
            <person name="Crowe M.L."/>
            <person name="Dalla E."/>
            <person name="Dalrymple B.P."/>
            <person name="de Bono B."/>
            <person name="Della Gatta G."/>
            <person name="di Bernardo D."/>
            <person name="Down T."/>
            <person name="Engstrom P."/>
            <person name="Fagiolini M."/>
            <person name="Faulkner G."/>
            <person name="Fletcher C.F."/>
            <person name="Fukushima T."/>
            <person name="Furuno M."/>
            <person name="Futaki S."/>
            <person name="Gariboldi M."/>
            <person name="Georgii-Hemming P."/>
            <person name="Gingeras T.R."/>
            <person name="Gojobori T."/>
            <person name="Green R.E."/>
            <person name="Gustincich S."/>
            <person name="Harbers M."/>
            <person name="Hayashi Y."/>
            <person name="Hensch T.K."/>
            <person name="Hirokawa N."/>
            <person name="Hill D."/>
            <person name="Huminiecki L."/>
            <person name="Iacono M."/>
            <person name="Ikeo K."/>
            <person name="Iwama A."/>
            <person name="Ishikawa T."/>
            <person name="Jakt M."/>
            <person name="Kanapin A."/>
            <person name="Katoh M."/>
            <person name="Kawasawa Y."/>
            <person name="Kelso J."/>
            <person name="Kitamura H."/>
            <person name="Kitano H."/>
            <person name="Kollias G."/>
            <person name="Krishnan S.P."/>
            <person name="Kruger A."/>
            <person name="Kummerfeld S.K."/>
            <person name="Kurochkin I.V."/>
            <person name="Lareau L.F."/>
            <person name="Lazarevic D."/>
            <person name="Lipovich L."/>
            <person name="Liu J."/>
            <person name="Liuni S."/>
            <person name="McWilliam S."/>
            <person name="Madan Babu M."/>
            <person name="Madera M."/>
            <person name="Marchionni L."/>
            <person name="Matsuda H."/>
            <person name="Matsuzawa S."/>
            <person name="Miki H."/>
            <person name="Mignone F."/>
            <person name="Miyake S."/>
            <person name="Morris K."/>
            <person name="Mottagui-Tabar S."/>
            <person name="Mulder N."/>
            <person name="Nakano N."/>
            <person name="Nakauchi H."/>
            <person name="Ng P."/>
            <person name="Nilsson R."/>
            <person name="Nishiguchi S."/>
            <person name="Nishikawa S."/>
            <person name="Nori F."/>
            <person name="Ohara O."/>
            <person name="Okazaki Y."/>
            <person name="Orlando V."/>
            <person name="Pang K.C."/>
            <person name="Pavan W.J."/>
            <person name="Pavesi G."/>
            <person name="Pesole G."/>
            <person name="Petrovsky N."/>
            <person name="Piazza S."/>
            <person name="Reed J."/>
            <person name="Reid J.F."/>
            <person name="Ring B.Z."/>
            <person name="Ringwald M."/>
            <person name="Rost B."/>
            <person name="Ruan Y."/>
            <person name="Salzberg S.L."/>
            <person name="Sandelin A."/>
            <person name="Schneider C."/>
            <person name="Schoenbach C."/>
            <person name="Sekiguchi K."/>
            <person name="Semple C.A."/>
            <person name="Seno S."/>
            <person name="Sessa L."/>
            <person name="Sheng Y."/>
            <person name="Shibata Y."/>
            <person name="Shimada H."/>
            <person name="Shimada K."/>
            <person name="Silva D."/>
            <person name="Sinclair B."/>
            <person name="Sperling S."/>
            <person name="Stupka E."/>
            <person name="Sugiura K."/>
            <person name="Sultana R."/>
            <person name="Takenaka Y."/>
            <person name="Taki K."/>
            <person name="Tammoja K."/>
            <person name="Tan S.L."/>
            <person name="Tang S."/>
            <person name="Taylor M.S."/>
            <person name="Tegner J."/>
            <person name="Teichmann S.A."/>
            <person name="Ueda H.R."/>
            <person name="van Nimwegen E."/>
            <person name="Verardo R."/>
            <person name="Wei C.L."/>
            <person name="Yagi K."/>
            <person name="Yamanishi H."/>
            <person name="Zabarovsky E."/>
            <person name="Zhu S."/>
            <person name="Zimmer A."/>
            <person name="Hide W."/>
            <person name="Bult C."/>
            <person name="Grimmond S.M."/>
            <person name="Teasdale R.D."/>
            <person name="Liu E.T."/>
            <person name="Brusic V."/>
            <person name="Quackenbush J."/>
            <person name="Wahlestedt C."/>
            <person name="Mattick J.S."/>
            <person name="Hume D.A."/>
            <person name="Kai C."/>
            <person name="Sasaki D."/>
            <person name="Tomaru Y."/>
            <person name="Fukuda S."/>
            <person name="Kanamori-Katayama M."/>
            <person name="Suzuki M."/>
            <person name="Aoki J."/>
            <person name="Arakawa T."/>
            <person name="Iida J."/>
            <person name="Imamura K."/>
            <person name="Itoh M."/>
            <person name="Kato T."/>
            <person name="Kawaji H."/>
            <person name="Kawagashira N."/>
            <person name="Kawashima T."/>
            <person name="Kojima M."/>
            <person name="Kondo S."/>
            <person name="Konno H."/>
            <person name="Nakano K."/>
            <person name="Ninomiya N."/>
            <person name="Nishio T."/>
            <person name="Okada M."/>
            <person name="Plessy C."/>
            <person name="Shibata K."/>
            <person name="Shiraki T."/>
            <person name="Suzuki S."/>
            <person name="Tagami M."/>
            <person name="Waki K."/>
            <person name="Watahiki A."/>
            <person name="Okamura-Oho Y."/>
            <person name="Suzuki H."/>
            <person name="Kawai J."/>
            <person name="Hayashizaki Y."/>
        </authorList>
    </citation>
    <scope>NUCLEOTIDE SEQUENCE [LARGE SCALE MRNA]</scope>
    <source>
        <strain>C57BL/6J</strain>
    </source>
</reference>
<accession>Q9QXK8</accession>
<sequence>MSRAAGHRPGLSAGQLAAATASPLLSLLLLLACCADACKGVPISPQRLQPEQELQLWNEIHEACASFLSIDSRPQASVALRELCRIVMEISQKPQEQSEKDNTKRFLFHYSKTQKLGNSNVVSSVVHPLLQLVPQLHERRMKRFKAEYQSPSVGQSKGYFLFRPRNGKRSTSFI</sequence>